<evidence type="ECO:0000255" key="1">
    <source>
        <dbReference type="HAMAP-Rule" id="MF_00508"/>
    </source>
</evidence>
<evidence type="ECO:0000305" key="2"/>
<reference key="1">
    <citation type="submission" date="2007-11" db="EMBL/GenBank/DDBJ databases">
        <authorList>
            <consortium name="The Salmonella enterica serovar Arizonae Genome Sequencing Project"/>
            <person name="McClelland M."/>
            <person name="Sanderson E.K."/>
            <person name="Porwollik S."/>
            <person name="Spieth J."/>
            <person name="Clifton W.S."/>
            <person name="Fulton R."/>
            <person name="Chunyan W."/>
            <person name="Wollam A."/>
            <person name="Shah N."/>
            <person name="Pepin K."/>
            <person name="Bhonagiri V."/>
            <person name="Nash W."/>
            <person name="Johnson M."/>
            <person name="Thiruvilangam P."/>
            <person name="Wilson R."/>
        </authorList>
    </citation>
    <scope>NUCLEOTIDE SEQUENCE [LARGE SCALE GENOMIC DNA]</scope>
    <source>
        <strain>ATCC BAA-731 / CDC346-86 / RSK2980</strain>
    </source>
</reference>
<proteinExistence type="inferred from homology"/>
<comment type="function">
    <text evidence="1">Involved in the binding of tRNA to the ribosomes.</text>
</comment>
<comment type="subunit">
    <text evidence="1">Part of the 30S ribosomal subunit.</text>
</comment>
<comment type="similarity">
    <text evidence="1">Belongs to the universal ribosomal protein uS10 family.</text>
</comment>
<dbReference type="EMBL" id="CP000880">
    <property type="protein sequence ID" value="ABX23975.1"/>
    <property type="molecule type" value="Genomic_DNA"/>
</dbReference>
<dbReference type="SMR" id="A9MN45"/>
<dbReference type="STRING" id="41514.SARI_04186"/>
<dbReference type="KEGG" id="ses:SARI_04186"/>
<dbReference type="HOGENOM" id="CLU_122625_1_3_6"/>
<dbReference type="Proteomes" id="UP000002084">
    <property type="component" value="Chromosome"/>
</dbReference>
<dbReference type="GO" id="GO:1990904">
    <property type="term" value="C:ribonucleoprotein complex"/>
    <property type="evidence" value="ECO:0007669"/>
    <property type="project" value="UniProtKB-KW"/>
</dbReference>
<dbReference type="GO" id="GO:0005840">
    <property type="term" value="C:ribosome"/>
    <property type="evidence" value="ECO:0007669"/>
    <property type="project" value="UniProtKB-KW"/>
</dbReference>
<dbReference type="GO" id="GO:0003735">
    <property type="term" value="F:structural constituent of ribosome"/>
    <property type="evidence" value="ECO:0007669"/>
    <property type="project" value="InterPro"/>
</dbReference>
<dbReference type="GO" id="GO:0000049">
    <property type="term" value="F:tRNA binding"/>
    <property type="evidence" value="ECO:0007669"/>
    <property type="project" value="UniProtKB-UniRule"/>
</dbReference>
<dbReference type="GO" id="GO:0006412">
    <property type="term" value="P:translation"/>
    <property type="evidence" value="ECO:0007669"/>
    <property type="project" value="UniProtKB-UniRule"/>
</dbReference>
<dbReference type="FunFam" id="3.30.70.600:FF:000001">
    <property type="entry name" value="30S ribosomal protein S10"/>
    <property type="match status" value="1"/>
</dbReference>
<dbReference type="Gene3D" id="3.30.70.600">
    <property type="entry name" value="Ribosomal protein S10 domain"/>
    <property type="match status" value="1"/>
</dbReference>
<dbReference type="HAMAP" id="MF_00508">
    <property type="entry name" value="Ribosomal_uS10"/>
    <property type="match status" value="1"/>
</dbReference>
<dbReference type="InterPro" id="IPR001848">
    <property type="entry name" value="Ribosomal_uS10"/>
</dbReference>
<dbReference type="InterPro" id="IPR018268">
    <property type="entry name" value="Ribosomal_uS10_CS"/>
</dbReference>
<dbReference type="InterPro" id="IPR027486">
    <property type="entry name" value="Ribosomal_uS10_dom"/>
</dbReference>
<dbReference type="InterPro" id="IPR036838">
    <property type="entry name" value="Ribosomal_uS10_dom_sf"/>
</dbReference>
<dbReference type="NCBIfam" id="NF001861">
    <property type="entry name" value="PRK00596.1"/>
    <property type="match status" value="1"/>
</dbReference>
<dbReference type="NCBIfam" id="TIGR01049">
    <property type="entry name" value="rpsJ_bact"/>
    <property type="match status" value="1"/>
</dbReference>
<dbReference type="PANTHER" id="PTHR11700">
    <property type="entry name" value="30S RIBOSOMAL PROTEIN S10 FAMILY MEMBER"/>
    <property type="match status" value="1"/>
</dbReference>
<dbReference type="Pfam" id="PF00338">
    <property type="entry name" value="Ribosomal_S10"/>
    <property type="match status" value="1"/>
</dbReference>
<dbReference type="PRINTS" id="PR00971">
    <property type="entry name" value="RIBOSOMALS10"/>
</dbReference>
<dbReference type="SMART" id="SM01403">
    <property type="entry name" value="Ribosomal_S10"/>
    <property type="match status" value="1"/>
</dbReference>
<dbReference type="SUPFAM" id="SSF54999">
    <property type="entry name" value="Ribosomal protein S10"/>
    <property type="match status" value="1"/>
</dbReference>
<dbReference type="PROSITE" id="PS00361">
    <property type="entry name" value="RIBOSOMAL_S10"/>
    <property type="match status" value="1"/>
</dbReference>
<protein>
    <recommendedName>
        <fullName evidence="1">Small ribosomal subunit protein uS10</fullName>
    </recommendedName>
    <alternativeName>
        <fullName evidence="2">30S ribosomal protein S10</fullName>
    </alternativeName>
</protein>
<name>RS10_SALAR</name>
<sequence length="103" mass="11767">MQNQRIRIRLKAFDHRLIDQSTAEIVETAKRTGAQVRGPIPLPTRKERFTVLISPHVNKDARDQYEIRTHKRLVDIVEPTEKTVDALMRLDLAAGVDVQISLG</sequence>
<accession>A9MN45</accession>
<organism>
    <name type="scientific">Salmonella arizonae (strain ATCC BAA-731 / CDC346-86 / RSK2980)</name>
    <dbReference type="NCBI Taxonomy" id="41514"/>
    <lineage>
        <taxon>Bacteria</taxon>
        <taxon>Pseudomonadati</taxon>
        <taxon>Pseudomonadota</taxon>
        <taxon>Gammaproteobacteria</taxon>
        <taxon>Enterobacterales</taxon>
        <taxon>Enterobacteriaceae</taxon>
        <taxon>Salmonella</taxon>
    </lineage>
</organism>
<feature type="chain" id="PRO_1000081565" description="Small ribosomal subunit protein uS10">
    <location>
        <begin position="1"/>
        <end position="103"/>
    </location>
</feature>
<keyword id="KW-1185">Reference proteome</keyword>
<keyword id="KW-0687">Ribonucleoprotein</keyword>
<keyword id="KW-0689">Ribosomal protein</keyword>
<gene>
    <name evidence="1" type="primary">rpsJ</name>
    <name type="ordered locus">SARI_04186</name>
</gene>